<evidence type="ECO:0000255" key="1">
    <source>
        <dbReference type="HAMAP-Rule" id="MF_00406"/>
    </source>
</evidence>
<protein>
    <recommendedName>
        <fullName evidence="1">3-hydroxyacyl-[acyl-carrier-protein] dehydratase FabZ</fullName>
        <ecNumber evidence="1">4.2.1.59</ecNumber>
    </recommendedName>
    <alternativeName>
        <fullName evidence="1">(3R)-hydroxymyristoyl-[acyl-carrier-protein] dehydratase</fullName>
        <shortName evidence="1">(3R)-hydroxymyristoyl-ACP dehydrase</shortName>
    </alternativeName>
    <alternativeName>
        <fullName evidence="1">Beta-hydroxyacyl-ACP dehydratase</fullName>
    </alternativeName>
</protein>
<dbReference type="EC" id="4.2.1.59" evidence="1"/>
<dbReference type="EMBL" id="FM204884">
    <property type="protein sequence ID" value="CAX00271.1"/>
    <property type="molecule type" value="Genomic_DNA"/>
</dbReference>
<dbReference type="SMR" id="C0ME11"/>
<dbReference type="KEGG" id="seq:SZO_15670"/>
<dbReference type="eggNOG" id="COG0764">
    <property type="taxonomic scope" value="Bacteria"/>
</dbReference>
<dbReference type="HOGENOM" id="CLU_078912_3_0_9"/>
<dbReference type="Proteomes" id="UP000001368">
    <property type="component" value="Chromosome"/>
</dbReference>
<dbReference type="GO" id="GO:0005737">
    <property type="term" value="C:cytoplasm"/>
    <property type="evidence" value="ECO:0007669"/>
    <property type="project" value="UniProtKB-SubCell"/>
</dbReference>
<dbReference type="GO" id="GO:0016020">
    <property type="term" value="C:membrane"/>
    <property type="evidence" value="ECO:0007669"/>
    <property type="project" value="GOC"/>
</dbReference>
<dbReference type="GO" id="GO:0019171">
    <property type="term" value="F:(3R)-hydroxyacyl-[acyl-carrier-protein] dehydratase activity"/>
    <property type="evidence" value="ECO:0007669"/>
    <property type="project" value="UniProtKB-EC"/>
</dbReference>
<dbReference type="GO" id="GO:0006633">
    <property type="term" value="P:fatty acid biosynthetic process"/>
    <property type="evidence" value="ECO:0007669"/>
    <property type="project" value="UniProtKB-UniRule"/>
</dbReference>
<dbReference type="GO" id="GO:0009245">
    <property type="term" value="P:lipid A biosynthetic process"/>
    <property type="evidence" value="ECO:0007669"/>
    <property type="project" value="UniProtKB-UniRule"/>
</dbReference>
<dbReference type="CDD" id="cd01288">
    <property type="entry name" value="FabZ"/>
    <property type="match status" value="1"/>
</dbReference>
<dbReference type="FunFam" id="3.10.129.10:FF:000001">
    <property type="entry name" value="3-hydroxyacyl-[acyl-carrier-protein] dehydratase FabZ"/>
    <property type="match status" value="1"/>
</dbReference>
<dbReference type="Gene3D" id="3.10.129.10">
    <property type="entry name" value="Hotdog Thioesterase"/>
    <property type="match status" value="1"/>
</dbReference>
<dbReference type="HAMAP" id="MF_00406">
    <property type="entry name" value="FabZ"/>
    <property type="match status" value="1"/>
</dbReference>
<dbReference type="InterPro" id="IPR013114">
    <property type="entry name" value="FabA_FabZ"/>
</dbReference>
<dbReference type="InterPro" id="IPR010084">
    <property type="entry name" value="FabZ"/>
</dbReference>
<dbReference type="InterPro" id="IPR029069">
    <property type="entry name" value="HotDog_dom_sf"/>
</dbReference>
<dbReference type="NCBIfam" id="TIGR01750">
    <property type="entry name" value="fabZ"/>
    <property type="match status" value="1"/>
</dbReference>
<dbReference type="NCBIfam" id="NF000582">
    <property type="entry name" value="PRK00006.1"/>
    <property type="match status" value="1"/>
</dbReference>
<dbReference type="PANTHER" id="PTHR30272">
    <property type="entry name" value="3-HYDROXYACYL-[ACYL-CARRIER-PROTEIN] DEHYDRATASE"/>
    <property type="match status" value="1"/>
</dbReference>
<dbReference type="PANTHER" id="PTHR30272:SF1">
    <property type="entry name" value="3-HYDROXYACYL-[ACYL-CARRIER-PROTEIN] DEHYDRATASE"/>
    <property type="match status" value="1"/>
</dbReference>
<dbReference type="Pfam" id="PF07977">
    <property type="entry name" value="FabA"/>
    <property type="match status" value="1"/>
</dbReference>
<dbReference type="SUPFAM" id="SSF54637">
    <property type="entry name" value="Thioesterase/thiol ester dehydrase-isomerase"/>
    <property type="match status" value="1"/>
</dbReference>
<feature type="chain" id="PRO_1000205949" description="3-hydroxyacyl-[acyl-carrier-protein] dehydratase FabZ">
    <location>
        <begin position="1"/>
        <end position="140"/>
    </location>
</feature>
<feature type="active site" evidence="1">
    <location>
        <position position="47"/>
    </location>
</feature>
<comment type="function">
    <text evidence="1">Involved in unsaturated fatty acids biosynthesis. Catalyzes the dehydration of short chain beta-hydroxyacyl-ACPs and long chain saturated and unsaturated beta-hydroxyacyl-ACPs.</text>
</comment>
<comment type="catalytic activity">
    <reaction evidence="1">
        <text>a (3R)-hydroxyacyl-[ACP] = a (2E)-enoyl-[ACP] + H2O</text>
        <dbReference type="Rhea" id="RHEA:13097"/>
        <dbReference type="Rhea" id="RHEA-COMP:9925"/>
        <dbReference type="Rhea" id="RHEA-COMP:9945"/>
        <dbReference type="ChEBI" id="CHEBI:15377"/>
        <dbReference type="ChEBI" id="CHEBI:78784"/>
        <dbReference type="ChEBI" id="CHEBI:78827"/>
        <dbReference type="EC" id="4.2.1.59"/>
    </reaction>
</comment>
<comment type="subcellular location">
    <subcellularLocation>
        <location evidence="1">Cytoplasm</location>
    </subcellularLocation>
</comment>
<comment type="similarity">
    <text evidence="1">Belongs to the thioester dehydratase family. FabZ subfamily.</text>
</comment>
<name>FABZ_STRS7</name>
<sequence>MMDIKQIQEALPHRYPMLLVDRILEASDDEIVAIKNVTINEPFFNGHFPQYPVMPGVLIMEALAQTAGVLELSKEENKGKLVFYAGMDKVKFKKQVVPGDQLVMTARFIKRRGTIAVVEAKAEVDGKLAASGTLTFAFGQ</sequence>
<keyword id="KW-0963">Cytoplasm</keyword>
<keyword id="KW-0441">Lipid A biosynthesis</keyword>
<keyword id="KW-0444">Lipid biosynthesis</keyword>
<keyword id="KW-0443">Lipid metabolism</keyword>
<keyword id="KW-0456">Lyase</keyword>
<proteinExistence type="inferred from homology"/>
<organism>
    <name type="scientific">Streptococcus equi subsp. zooepidemicus (strain H70)</name>
    <dbReference type="NCBI Taxonomy" id="553483"/>
    <lineage>
        <taxon>Bacteria</taxon>
        <taxon>Bacillati</taxon>
        <taxon>Bacillota</taxon>
        <taxon>Bacilli</taxon>
        <taxon>Lactobacillales</taxon>
        <taxon>Streptococcaceae</taxon>
        <taxon>Streptococcus</taxon>
    </lineage>
</organism>
<reference key="1">
    <citation type="journal article" date="2009" name="PLoS Pathog.">
        <title>Genomic evidence for the evolution of Streptococcus equi: host restriction, increased virulence, and genetic exchange with human pathogens.</title>
        <authorList>
            <person name="Holden M.T.G."/>
            <person name="Heather Z."/>
            <person name="Paillot R."/>
            <person name="Steward K.F."/>
            <person name="Webb K."/>
            <person name="Ainslie F."/>
            <person name="Jourdan T."/>
            <person name="Bason N.C."/>
            <person name="Holroyd N.E."/>
            <person name="Mungall K."/>
            <person name="Quail M.A."/>
            <person name="Sanders M."/>
            <person name="Simmonds M."/>
            <person name="Willey D."/>
            <person name="Brooks K."/>
            <person name="Aanensen D.M."/>
            <person name="Spratt B.G."/>
            <person name="Jolley K.A."/>
            <person name="Maiden M.C.J."/>
            <person name="Kehoe M."/>
            <person name="Chanter N."/>
            <person name="Bentley S.D."/>
            <person name="Robinson C."/>
            <person name="Maskell D.J."/>
            <person name="Parkhill J."/>
            <person name="Waller A.S."/>
        </authorList>
    </citation>
    <scope>NUCLEOTIDE SEQUENCE [LARGE SCALE GENOMIC DNA]</scope>
    <source>
        <strain>H70</strain>
    </source>
</reference>
<accession>C0ME11</accession>
<gene>
    <name evidence="1" type="primary">fabZ</name>
    <name type="ordered locus">SZO_15670</name>
</gene>